<proteinExistence type="inferred from homology"/>
<protein>
    <recommendedName>
        <fullName evidence="1">Large ribosomal subunit protein uL1</fullName>
    </recommendedName>
    <alternativeName>
        <fullName evidence="2">50S ribosomal protein L1</fullName>
    </alternativeName>
</protein>
<gene>
    <name evidence="1" type="primary">rplA</name>
    <name type="ordered locus">ABAYE3492</name>
</gene>
<feature type="chain" id="PRO_1000141347" description="Large ribosomal subunit protein uL1">
    <location>
        <begin position="1"/>
        <end position="231"/>
    </location>
</feature>
<organism>
    <name type="scientific">Acinetobacter baumannii (strain AYE)</name>
    <dbReference type="NCBI Taxonomy" id="509173"/>
    <lineage>
        <taxon>Bacteria</taxon>
        <taxon>Pseudomonadati</taxon>
        <taxon>Pseudomonadota</taxon>
        <taxon>Gammaproteobacteria</taxon>
        <taxon>Moraxellales</taxon>
        <taxon>Moraxellaceae</taxon>
        <taxon>Acinetobacter</taxon>
        <taxon>Acinetobacter calcoaceticus/baumannii complex</taxon>
    </lineage>
</organism>
<keyword id="KW-0678">Repressor</keyword>
<keyword id="KW-0687">Ribonucleoprotein</keyword>
<keyword id="KW-0689">Ribosomal protein</keyword>
<keyword id="KW-0694">RNA-binding</keyword>
<keyword id="KW-0699">rRNA-binding</keyword>
<keyword id="KW-0810">Translation regulation</keyword>
<keyword id="KW-0820">tRNA-binding</keyword>
<comment type="function">
    <text evidence="1">Binds directly to 23S rRNA. The L1 stalk is quite mobile in the ribosome, and is involved in E site tRNA release.</text>
</comment>
<comment type="function">
    <text evidence="1">Protein L1 is also a translational repressor protein, it controls the translation of the L11 operon by binding to its mRNA.</text>
</comment>
<comment type="subunit">
    <text evidence="1">Part of the 50S ribosomal subunit.</text>
</comment>
<comment type="similarity">
    <text evidence="1">Belongs to the universal ribosomal protein uL1 family.</text>
</comment>
<dbReference type="EMBL" id="CU459141">
    <property type="protein sequence ID" value="CAM88280.1"/>
    <property type="molecule type" value="Genomic_DNA"/>
</dbReference>
<dbReference type="RefSeq" id="WP_001096694.1">
    <property type="nucleotide sequence ID" value="NZ_JBDGFB010000003.1"/>
</dbReference>
<dbReference type="SMR" id="B0VDG5"/>
<dbReference type="EnsemblBacteria" id="CAM88280">
    <property type="protein sequence ID" value="CAM88280"/>
    <property type="gene ID" value="ABAYE3492"/>
</dbReference>
<dbReference type="GeneID" id="92892281"/>
<dbReference type="KEGG" id="aby:ABAYE3492"/>
<dbReference type="HOGENOM" id="CLU_062853_0_0_6"/>
<dbReference type="GO" id="GO:0022625">
    <property type="term" value="C:cytosolic large ribosomal subunit"/>
    <property type="evidence" value="ECO:0007669"/>
    <property type="project" value="TreeGrafter"/>
</dbReference>
<dbReference type="GO" id="GO:0019843">
    <property type="term" value="F:rRNA binding"/>
    <property type="evidence" value="ECO:0007669"/>
    <property type="project" value="UniProtKB-UniRule"/>
</dbReference>
<dbReference type="GO" id="GO:0003735">
    <property type="term" value="F:structural constituent of ribosome"/>
    <property type="evidence" value="ECO:0007669"/>
    <property type="project" value="InterPro"/>
</dbReference>
<dbReference type="GO" id="GO:0000049">
    <property type="term" value="F:tRNA binding"/>
    <property type="evidence" value="ECO:0007669"/>
    <property type="project" value="UniProtKB-KW"/>
</dbReference>
<dbReference type="GO" id="GO:0006417">
    <property type="term" value="P:regulation of translation"/>
    <property type="evidence" value="ECO:0007669"/>
    <property type="project" value="UniProtKB-KW"/>
</dbReference>
<dbReference type="GO" id="GO:0006412">
    <property type="term" value="P:translation"/>
    <property type="evidence" value="ECO:0007669"/>
    <property type="project" value="UniProtKB-UniRule"/>
</dbReference>
<dbReference type="CDD" id="cd00403">
    <property type="entry name" value="Ribosomal_L1"/>
    <property type="match status" value="1"/>
</dbReference>
<dbReference type="FunFam" id="3.40.50.790:FF:000001">
    <property type="entry name" value="50S ribosomal protein L1"/>
    <property type="match status" value="1"/>
</dbReference>
<dbReference type="Gene3D" id="3.30.190.20">
    <property type="match status" value="1"/>
</dbReference>
<dbReference type="Gene3D" id="3.40.50.790">
    <property type="match status" value="1"/>
</dbReference>
<dbReference type="HAMAP" id="MF_01318_B">
    <property type="entry name" value="Ribosomal_uL1_B"/>
    <property type="match status" value="1"/>
</dbReference>
<dbReference type="InterPro" id="IPR005878">
    <property type="entry name" value="Ribosom_uL1_bac-type"/>
</dbReference>
<dbReference type="InterPro" id="IPR002143">
    <property type="entry name" value="Ribosomal_uL1"/>
</dbReference>
<dbReference type="InterPro" id="IPR023674">
    <property type="entry name" value="Ribosomal_uL1-like"/>
</dbReference>
<dbReference type="InterPro" id="IPR028364">
    <property type="entry name" value="Ribosomal_uL1/biogenesis"/>
</dbReference>
<dbReference type="InterPro" id="IPR016095">
    <property type="entry name" value="Ribosomal_uL1_3-a/b-sand"/>
</dbReference>
<dbReference type="InterPro" id="IPR023673">
    <property type="entry name" value="Ribosomal_uL1_CS"/>
</dbReference>
<dbReference type="NCBIfam" id="TIGR01169">
    <property type="entry name" value="rplA_bact"/>
    <property type="match status" value="1"/>
</dbReference>
<dbReference type="PANTHER" id="PTHR36427">
    <property type="entry name" value="54S RIBOSOMAL PROTEIN L1, MITOCHONDRIAL"/>
    <property type="match status" value="1"/>
</dbReference>
<dbReference type="PANTHER" id="PTHR36427:SF3">
    <property type="entry name" value="LARGE RIBOSOMAL SUBUNIT PROTEIN UL1M"/>
    <property type="match status" value="1"/>
</dbReference>
<dbReference type="Pfam" id="PF00687">
    <property type="entry name" value="Ribosomal_L1"/>
    <property type="match status" value="1"/>
</dbReference>
<dbReference type="PIRSF" id="PIRSF002155">
    <property type="entry name" value="Ribosomal_L1"/>
    <property type="match status" value="1"/>
</dbReference>
<dbReference type="SUPFAM" id="SSF56808">
    <property type="entry name" value="Ribosomal protein L1"/>
    <property type="match status" value="1"/>
</dbReference>
<dbReference type="PROSITE" id="PS01199">
    <property type="entry name" value="RIBOSOMAL_L1"/>
    <property type="match status" value="1"/>
</dbReference>
<reference key="1">
    <citation type="journal article" date="2008" name="PLoS ONE">
        <title>Comparative analysis of Acinetobacters: three genomes for three lifestyles.</title>
        <authorList>
            <person name="Vallenet D."/>
            <person name="Nordmann P."/>
            <person name="Barbe V."/>
            <person name="Poirel L."/>
            <person name="Mangenot S."/>
            <person name="Bataille E."/>
            <person name="Dossat C."/>
            <person name="Gas S."/>
            <person name="Kreimeyer A."/>
            <person name="Lenoble P."/>
            <person name="Oztas S."/>
            <person name="Poulain J."/>
            <person name="Segurens B."/>
            <person name="Robert C."/>
            <person name="Abergel C."/>
            <person name="Claverie J.-M."/>
            <person name="Raoult D."/>
            <person name="Medigue C."/>
            <person name="Weissenbach J."/>
            <person name="Cruveiller S."/>
        </authorList>
    </citation>
    <scope>NUCLEOTIDE SEQUENCE [LARGE SCALE GENOMIC DNA]</scope>
    <source>
        <strain>AYE</strain>
    </source>
</reference>
<name>RL1_ACIBY</name>
<accession>B0VDG5</accession>
<sequence length="231" mass="23857">MAKLTKRQKAIAAAVEANKVYTLEEAVQVLNSLPAAKFKESLDISVNLGVDPRKSDQVVRGATTLPAGTGKTVRVAVFAQGAQAEAAKEAGADVVGFDDLAESIQGGNLDFDVVIAAPDAMRVVGKLGTILGPRGLMPNPKVGTVTPDVAGAVKNAKSGQARYRVDKAGIIHAAIGQVGFDAAAIRQNVETLVADLKKLKPATSKGVYIKKITLSSTMGPGLTVDVNNVSN</sequence>
<evidence type="ECO:0000255" key="1">
    <source>
        <dbReference type="HAMAP-Rule" id="MF_01318"/>
    </source>
</evidence>
<evidence type="ECO:0000305" key="2"/>